<protein>
    <recommendedName>
        <fullName>Uncharacterized protein CPn_0526/CP_0226/CPj0526/CpB0547</fullName>
    </recommendedName>
</protein>
<organism>
    <name type="scientific">Chlamydia pneumoniae</name>
    <name type="common">Chlamydophila pneumoniae</name>
    <dbReference type="NCBI Taxonomy" id="83558"/>
    <lineage>
        <taxon>Bacteria</taxon>
        <taxon>Pseudomonadati</taxon>
        <taxon>Chlamydiota</taxon>
        <taxon>Chlamydiia</taxon>
        <taxon>Chlamydiales</taxon>
        <taxon>Chlamydiaceae</taxon>
        <taxon>Chlamydia/Chlamydophila group</taxon>
        <taxon>Chlamydia</taxon>
    </lineage>
</organism>
<dbReference type="EMBL" id="AE001363">
    <property type="protein sequence ID" value="AAD18666.1"/>
    <property type="molecule type" value="Genomic_DNA"/>
</dbReference>
<dbReference type="EMBL" id="AE002161">
    <property type="protein sequence ID" value="AAF38092.1"/>
    <property type="molecule type" value="Genomic_DNA"/>
</dbReference>
<dbReference type="EMBL" id="BA000008">
    <property type="protein sequence ID" value="BAA98732.1"/>
    <property type="molecule type" value="Genomic_DNA"/>
</dbReference>
<dbReference type="EMBL" id="AE009440">
    <property type="protein sequence ID" value="AAP98476.1"/>
    <property type="molecule type" value="Genomic_DNA"/>
</dbReference>
<dbReference type="PIR" id="B86556">
    <property type="entry name" value="B86556"/>
</dbReference>
<dbReference type="PIR" id="E72068">
    <property type="entry name" value="E72068"/>
</dbReference>
<dbReference type="RefSeq" id="NP_224722.1">
    <property type="nucleotide sequence ID" value="NC_000922.1"/>
</dbReference>
<dbReference type="RefSeq" id="WP_010883164.1">
    <property type="nucleotide sequence ID" value="NZ_LN847257.1"/>
</dbReference>
<dbReference type="SMR" id="Q9Z826"/>
<dbReference type="STRING" id="406984.CPK_ORF01041"/>
<dbReference type="GeneID" id="45050568"/>
<dbReference type="KEGG" id="cpa:CP_0226"/>
<dbReference type="KEGG" id="cpj:kpsF"/>
<dbReference type="KEGG" id="cpn:CPn_0526"/>
<dbReference type="KEGG" id="cpt:CpB0547"/>
<dbReference type="PATRIC" id="fig|115713.3.peg.586"/>
<dbReference type="eggNOG" id="COG0517">
    <property type="taxonomic scope" value="Bacteria"/>
</dbReference>
<dbReference type="eggNOG" id="COG0794">
    <property type="taxonomic scope" value="Bacteria"/>
</dbReference>
<dbReference type="HOGENOM" id="CLU_040681_13_2_0"/>
<dbReference type="OrthoDB" id="9762536at2"/>
<dbReference type="Proteomes" id="UP000000583">
    <property type="component" value="Chromosome"/>
</dbReference>
<dbReference type="Proteomes" id="UP000000801">
    <property type="component" value="Chromosome"/>
</dbReference>
<dbReference type="GO" id="GO:0005524">
    <property type="term" value="F:ATP binding"/>
    <property type="evidence" value="ECO:0007669"/>
    <property type="project" value="UniProtKB-KW"/>
</dbReference>
<dbReference type="GO" id="GO:0016853">
    <property type="term" value="F:isomerase activity"/>
    <property type="evidence" value="ECO:0007669"/>
    <property type="project" value="InterPro"/>
</dbReference>
<dbReference type="GO" id="GO:1901135">
    <property type="term" value="P:carbohydrate derivative metabolic process"/>
    <property type="evidence" value="ECO:0007669"/>
    <property type="project" value="InterPro"/>
</dbReference>
<dbReference type="GO" id="GO:0005975">
    <property type="term" value="P:carbohydrate metabolic process"/>
    <property type="evidence" value="ECO:0007669"/>
    <property type="project" value="InterPro"/>
</dbReference>
<dbReference type="CDD" id="cd04604">
    <property type="entry name" value="CBS_pair_SIS_assoc"/>
    <property type="match status" value="1"/>
</dbReference>
<dbReference type="CDD" id="cd05014">
    <property type="entry name" value="SIS_Kpsf"/>
    <property type="match status" value="1"/>
</dbReference>
<dbReference type="Gene3D" id="3.10.580.10">
    <property type="entry name" value="CBS-domain"/>
    <property type="match status" value="1"/>
</dbReference>
<dbReference type="Gene3D" id="3.40.50.10490">
    <property type="entry name" value="Glucose-6-phosphate isomerase like protein, domain 1"/>
    <property type="match status" value="1"/>
</dbReference>
<dbReference type="InterPro" id="IPR000644">
    <property type="entry name" value="CBS_dom"/>
</dbReference>
<dbReference type="InterPro" id="IPR046342">
    <property type="entry name" value="CBS_dom_sf"/>
</dbReference>
<dbReference type="InterPro" id="IPR004800">
    <property type="entry name" value="KdsD/KpsF-type"/>
</dbReference>
<dbReference type="InterPro" id="IPR001347">
    <property type="entry name" value="SIS_dom"/>
</dbReference>
<dbReference type="InterPro" id="IPR046348">
    <property type="entry name" value="SIS_dom_sf"/>
</dbReference>
<dbReference type="InterPro" id="IPR035474">
    <property type="entry name" value="SIS_Kpsf"/>
</dbReference>
<dbReference type="PANTHER" id="PTHR47476">
    <property type="match status" value="1"/>
</dbReference>
<dbReference type="PANTHER" id="PTHR47476:SF2">
    <property type="entry name" value="ARABINOSE 5-PHOSPHATE ISOMERASE-RELATED"/>
    <property type="match status" value="1"/>
</dbReference>
<dbReference type="Pfam" id="PF00571">
    <property type="entry name" value="CBS"/>
    <property type="match status" value="2"/>
</dbReference>
<dbReference type="Pfam" id="PF01380">
    <property type="entry name" value="SIS"/>
    <property type="match status" value="1"/>
</dbReference>
<dbReference type="PIRSF" id="PIRSF004692">
    <property type="entry name" value="KdsD_KpsF"/>
    <property type="match status" value="1"/>
</dbReference>
<dbReference type="SMART" id="SM00116">
    <property type="entry name" value="CBS"/>
    <property type="match status" value="2"/>
</dbReference>
<dbReference type="SUPFAM" id="SSF53697">
    <property type="entry name" value="SIS domain"/>
    <property type="match status" value="1"/>
</dbReference>
<dbReference type="PROSITE" id="PS51371">
    <property type="entry name" value="CBS"/>
    <property type="match status" value="2"/>
</dbReference>
<dbReference type="PROSITE" id="PS51464">
    <property type="entry name" value="SIS"/>
    <property type="match status" value="1"/>
</dbReference>
<comment type="similarity">
    <text evidence="4">Belongs to the SIS family. GutQ/KpsF subfamily.</text>
</comment>
<gene>
    <name type="ordered locus">CPn_0526</name>
    <name type="ordered locus">CP_0226</name>
    <name type="ordered locus">CPj0526</name>
    <name type="ordered locus">CpB0547</name>
</gene>
<sequence length="329" mass="35650">MPSPMISTDVCQDILGKQKEAVDFFFQAFQPKEAMQLAEKILGHSGWVFFSGVGKSGCVARKLVATLQSLSERALFFSPVDLLHGDLGLVSPGDIVCLFSKSGETQELLDTVPHLKSRRAILVAITSMPYSNLAALSDLVVILPSVAELDPFNLIPTNSTTCQMIFGDFLAMLLFHSRGVSLSTYGKNHPSGQVGMKANGKVKDFMFPKTEVPFCHLGDKVSFSLEVFSAYGCGCVCIVDPQFRLMGIFTDGDLRRSLASYGGEVLSLSLEKVMTANPRCITEDSDIAIALQLMESSSPVAVLPVLDNEENRHVTGLLHMHTLAKAGLL</sequence>
<evidence type="ECO:0000255" key="1"/>
<evidence type="ECO:0000255" key="2">
    <source>
        <dbReference type="PROSITE-ProRule" id="PRU00703"/>
    </source>
</evidence>
<evidence type="ECO:0000255" key="3">
    <source>
        <dbReference type="PROSITE-ProRule" id="PRU00797"/>
    </source>
</evidence>
<evidence type="ECO:0000305" key="4"/>
<accession>Q9Z826</accession>
<accession>Q9JQA7</accession>
<keyword id="KW-0067">ATP-binding</keyword>
<keyword id="KW-0129">CBS domain</keyword>
<keyword id="KW-0547">Nucleotide-binding</keyword>
<keyword id="KW-0677">Repeat</keyword>
<name>Y526_CHLPN</name>
<proteinExistence type="inferred from homology"/>
<reference key="1">
    <citation type="journal article" date="1999" name="Nat. Genet.">
        <title>Comparative genomes of Chlamydia pneumoniae and C. trachomatis.</title>
        <authorList>
            <person name="Kalman S."/>
            <person name="Mitchell W.P."/>
            <person name="Marathe R."/>
            <person name="Lammel C.J."/>
            <person name="Fan J."/>
            <person name="Hyman R.W."/>
            <person name="Olinger L."/>
            <person name="Grimwood J."/>
            <person name="Davis R.W."/>
            <person name="Stephens R.S."/>
        </authorList>
    </citation>
    <scope>NUCLEOTIDE SEQUENCE [LARGE SCALE GENOMIC DNA]</scope>
    <source>
        <strain>CWL029</strain>
    </source>
</reference>
<reference key="2">
    <citation type="journal article" date="2000" name="Nucleic Acids Res.">
        <title>Genome sequences of Chlamydia trachomatis MoPn and Chlamydia pneumoniae AR39.</title>
        <authorList>
            <person name="Read T.D."/>
            <person name="Brunham R.C."/>
            <person name="Shen C."/>
            <person name="Gill S.R."/>
            <person name="Heidelberg J.F."/>
            <person name="White O."/>
            <person name="Hickey E.K."/>
            <person name="Peterson J.D."/>
            <person name="Utterback T.R."/>
            <person name="Berry K.J."/>
            <person name="Bass S."/>
            <person name="Linher K.D."/>
            <person name="Weidman J.F."/>
            <person name="Khouri H.M."/>
            <person name="Craven B."/>
            <person name="Bowman C."/>
            <person name="Dodson R.J."/>
            <person name="Gwinn M.L."/>
            <person name="Nelson W.C."/>
            <person name="DeBoy R.T."/>
            <person name="Kolonay J.F."/>
            <person name="McClarty G."/>
            <person name="Salzberg S.L."/>
            <person name="Eisen J.A."/>
            <person name="Fraser C.M."/>
        </authorList>
    </citation>
    <scope>NUCLEOTIDE SEQUENCE [LARGE SCALE GENOMIC DNA]</scope>
    <source>
        <strain>AR39</strain>
    </source>
</reference>
<reference key="3">
    <citation type="journal article" date="2000" name="Nucleic Acids Res.">
        <title>Comparison of whole genome sequences of Chlamydia pneumoniae J138 from Japan and CWL029 from USA.</title>
        <authorList>
            <person name="Shirai M."/>
            <person name="Hirakawa H."/>
            <person name="Kimoto M."/>
            <person name="Tabuchi M."/>
            <person name="Kishi F."/>
            <person name="Ouchi K."/>
            <person name="Shiba T."/>
            <person name="Ishii K."/>
            <person name="Hattori M."/>
            <person name="Kuhara S."/>
            <person name="Nakazawa T."/>
        </authorList>
    </citation>
    <scope>NUCLEOTIDE SEQUENCE [LARGE SCALE GENOMIC DNA]</scope>
    <source>
        <strain>J138</strain>
    </source>
</reference>
<reference key="4">
    <citation type="submission" date="2002-05" db="EMBL/GenBank/DDBJ databases">
        <title>The genome sequence of Chlamydia pneumoniae TW183 and comparison with other Chlamydia strains based on whole genome sequence analysis.</title>
        <authorList>
            <person name="Geng M.M."/>
            <person name="Schuhmacher A."/>
            <person name="Muehldorfer I."/>
            <person name="Bensch K.W."/>
            <person name="Schaefer K.P."/>
            <person name="Schneider S."/>
            <person name="Pohl T."/>
            <person name="Essig A."/>
            <person name="Marre R."/>
            <person name="Melchers K."/>
        </authorList>
    </citation>
    <scope>NUCLEOTIDE SEQUENCE [LARGE SCALE GENOMIC DNA]</scope>
    <source>
        <strain>TW-183</strain>
    </source>
</reference>
<feature type="chain" id="PRO_0000136585" description="Uncharacterized protein CPn_0526/CP_0226/CPj0526/CpB0547">
    <location>
        <begin position="1"/>
        <end position="329"/>
    </location>
</feature>
<feature type="domain" description="SIS" evidence="3">
    <location>
        <begin position="37"/>
        <end position="180"/>
    </location>
</feature>
<feature type="domain" description="CBS 1" evidence="2">
    <location>
        <begin position="206"/>
        <end position="265"/>
    </location>
</feature>
<feature type="domain" description="CBS 2" evidence="2">
    <location>
        <begin position="274"/>
        <end position="329"/>
    </location>
</feature>
<feature type="binding site" evidence="1">
    <location>
        <begin position="52"/>
        <end position="57"/>
    </location>
    <ligand>
        <name>ATP</name>
        <dbReference type="ChEBI" id="CHEBI:30616"/>
    </ligand>
</feature>